<feature type="chain" id="PRO_1000052160" description="Large ribosomal subunit protein uL3">
    <location>
        <begin position="1"/>
        <end position="218"/>
    </location>
</feature>
<feature type="region of interest" description="Disordered" evidence="2">
    <location>
        <begin position="126"/>
        <end position="163"/>
    </location>
</feature>
<comment type="function">
    <text evidence="1">One of the primary rRNA binding proteins, it binds directly near the 3'-end of the 23S rRNA, where it nucleates assembly of the 50S subunit.</text>
</comment>
<comment type="subunit">
    <text evidence="1">Part of the 50S ribosomal subunit. Forms a cluster with proteins L14 and L19.</text>
</comment>
<comment type="similarity">
    <text evidence="1">Belongs to the universal ribosomal protein uL3 family.</text>
</comment>
<protein>
    <recommendedName>
        <fullName evidence="1">Large ribosomal subunit protein uL3</fullName>
    </recommendedName>
    <alternativeName>
        <fullName evidence="3">50S ribosomal protein L3</fullName>
    </alternativeName>
</protein>
<evidence type="ECO:0000255" key="1">
    <source>
        <dbReference type="HAMAP-Rule" id="MF_01325"/>
    </source>
</evidence>
<evidence type="ECO:0000256" key="2">
    <source>
        <dbReference type="SAM" id="MobiDB-lite"/>
    </source>
</evidence>
<evidence type="ECO:0000305" key="3"/>
<name>RL3_SYNS3</name>
<accession>Q0ID05</accession>
<sequence>MSIGILGKKLGMSQFFDEQGKAVPVTLIEAGPCRITQLKSSETDGYQAVQIGFGEIREKLINKPAKGHLAKSGEDLVRHLCEYRVDDLDGIQLGGAVTVGDFAAGQKVDVSGDTMGRGFAGLQKRHGFSRGPMTHGSKNHRQPGSIGAGTTPGRIYPGKRMSGRYGGKKITTRGLTILKIDSERNLLVVKGSVPGKPGSLLNIRPANRVGAKPAKGGK</sequence>
<keyword id="KW-1185">Reference proteome</keyword>
<keyword id="KW-0687">Ribonucleoprotein</keyword>
<keyword id="KW-0689">Ribosomal protein</keyword>
<keyword id="KW-0694">RNA-binding</keyword>
<keyword id="KW-0699">rRNA-binding</keyword>
<proteinExistence type="inferred from homology"/>
<gene>
    <name evidence="1" type="primary">rplC</name>
    <name evidence="1" type="synonym">rpl3</name>
    <name type="ordered locus">sync_0437</name>
</gene>
<dbReference type="EMBL" id="CP000435">
    <property type="protein sequence ID" value="ABI45670.1"/>
    <property type="molecule type" value="Genomic_DNA"/>
</dbReference>
<dbReference type="RefSeq" id="WP_011618399.1">
    <property type="nucleotide sequence ID" value="NC_008319.1"/>
</dbReference>
<dbReference type="SMR" id="Q0ID05"/>
<dbReference type="STRING" id="64471.sync_0437"/>
<dbReference type="KEGG" id="syg:sync_0437"/>
<dbReference type="eggNOG" id="COG0087">
    <property type="taxonomic scope" value="Bacteria"/>
</dbReference>
<dbReference type="HOGENOM" id="CLU_044142_4_1_3"/>
<dbReference type="OrthoDB" id="9806135at2"/>
<dbReference type="Proteomes" id="UP000001961">
    <property type="component" value="Chromosome"/>
</dbReference>
<dbReference type="GO" id="GO:0022625">
    <property type="term" value="C:cytosolic large ribosomal subunit"/>
    <property type="evidence" value="ECO:0007669"/>
    <property type="project" value="TreeGrafter"/>
</dbReference>
<dbReference type="GO" id="GO:0019843">
    <property type="term" value="F:rRNA binding"/>
    <property type="evidence" value="ECO:0007669"/>
    <property type="project" value="UniProtKB-UniRule"/>
</dbReference>
<dbReference type="GO" id="GO:0003735">
    <property type="term" value="F:structural constituent of ribosome"/>
    <property type="evidence" value="ECO:0007669"/>
    <property type="project" value="InterPro"/>
</dbReference>
<dbReference type="GO" id="GO:0006412">
    <property type="term" value="P:translation"/>
    <property type="evidence" value="ECO:0007669"/>
    <property type="project" value="UniProtKB-UniRule"/>
</dbReference>
<dbReference type="FunFam" id="3.30.160.810:FF:000001">
    <property type="entry name" value="50S ribosomal protein L3"/>
    <property type="match status" value="1"/>
</dbReference>
<dbReference type="FunFam" id="2.40.30.10:FF:000065">
    <property type="entry name" value="50S ribosomal protein L3, chloroplastic"/>
    <property type="match status" value="1"/>
</dbReference>
<dbReference type="Gene3D" id="3.30.160.810">
    <property type="match status" value="1"/>
</dbReference>
<dbReference type="Gene3D" id="2.40.30.10">
    <property type="entry name" value="Translation factors"/>
    <property type="match status" value="1"/>
</dbReference>
<dbReference type="HAMAP" id="MF_01325_B">
    <property type="entry name" value="Ribosomal_uL3_B"/>
    <property type="match status" value="1"/>
</dbReference>
<dbReference type="InterPro" id="IPR000597">
    <property type="entry name" value="Ribosomal_uL3"/>
</dbReference>
<dbReference type="InterPro" id="IPR019927">
    <property type="entry name" value="Ribosomal_uL3_bac/org-type"/>
</dbReference>
<dbReference type="InterPro" id="IPR019926">
    <property type="entry name" value="Ribosomal_uL3_CS"/>
</dbReference>
<dbReference type="InterPro" id="IPR009000">
    <property type="entry name" value="Transl_B-barrel_sf"/>
</dbReference>
<dbReference type="NCBIfam" id="TIGR03625">
    <property type="entry name" value="L3_bact"/>
    <property type="match status" value="1"/>
</dbReference>
<dbReference type="PANTHER" id="PTHR11229">
    <property type="entry name" value="50S RIBOSOMAL PROTEIN L3"/>
    <property type="match status" value="1"/>
</dbReference>
<dbReference type="PANTHER" id="PTHR11229:SF16">
    <property type="entry name" value="LARGE RIBOSOMAL SUBUNIT PROTEIN UL3C"/>
    <property type="match status" value="1"/>
</dbReference>
<dbReference type="Pfam" id="PF00297">
    <property type="entry name" value="Ribosomal_L3"/>
    <property type="match status" value="1"/>
</dbReference>
<dbReference type="SUPFAM" id="SSF50447">
    <property type="entry name" value="Translation proteins"/>
    <property type="match status" value="1"/>
</dbReference>
<dbReference type="PROSITE" id="PS00474">
    <property type="entry name" value="RIBOSOMAL_L3"/>
    <property type="match status" value="1"/>
</dbReference>
<reference key="1">
    <citation type="journal article" date="2006" name="Proc. Natl. Acad. Sci. U.S.A.">
        <title>Genome sequence of Synechococcus CC9311: insights into adaptation to a coastal environment.</title>
        <authorList>
            <person name="Palenik B."/>
            <person name="Ren Q."/>
            <person name="Dupont C.L."/>
            <person name="Myers G.S."/>
            <person name="Heidelberg J.F."/>
            <person name="Badger J.H."/>
            <person name="Madupu R."/>
            <person name="Nelson W.C."/>
            <person name="Brinkac L.M."/>
            <person name="Dodson R.J."/>
            <person name="Durkin A.S."/>
            <person name="Daugherty S.C."/>
            <person name="Sullivan S.A."/>
            <person name="Khouri H."/>
            <person name="Mohamoud Y."/>
            <person name="Halpin R."/>
            <person name="Paulsen I.T."/>
        </authorList>
    </citation>
    <scope>NUCLEOTIDE SEQUENCE [LARGE SCALE GENOMIC DNA]</scope>
    <source>
        <strain>CC9311</strain>
    </source>
</reference>
<organism>
    <name type="scientific">Synechococcus sp. (strain CC9311)</name>
    <dbReference type="NCBI Taxonomy" id="64471"/>
    <lineage>
        <taxon>Bacteria</taxon>
        <taxon>Bacillati</taxon>
        <taxon>Cyanobacteriota</taxon>
        <taxon>Cyanophyceae</taxon>
        <taxon>Synechococcales</taxon>
        <taxon>Synechococcaceae</taxon>
        <taxon>Synechococcus</taxon>
    </lineage>
</organism>